<proteinExistence type="inferred from homology"/>
<protein>
    <recommendedName>
        <fullName evidence="1">Pyrimidine monooxygenase RutA</fullName>
        <ecNumber evidence="1">1.14.99.46</ecNumber>
    </recommendedName>
</protein>
<evidence type="ECO:0000255" key="1">
    <source>
        <dbReference type="HAMAP-Rule" id="MF_01699"/>
    </source>
</evidence>
<name>RUTA_ECOSE</name>
<gene>
    <name evidence="1" type="primary">rutA</name>
    <name type="ordered locus">ECSE_1074</name>
</gene>
<reference key="1">
    <citation type="journal article" date="2008" name="DNA Res.">
        <title>Complete genome sequence and comparative analysis of the wild-type commensal Escherichia coli strain SE11 isolated from a healthy adult.</title>
        <authorList>
            <person name="Oshima K."/>
            <person name="Toh H."/>
            <person name="Ogura Y."/>
            <person name="Sasamoto H."/>
            <person name="Morita H."/>
            <person name="Park S.-H."/>
            <person name="Ooka T."/>
            <person name="Iyoda S."/>
            <person name="Taylor T.D."/>
            <person name="Hayashi T."/>
            <person name="Itoh K."/>
            <person name="Hattori M."/>
        </authorList>
    </citation>
    <scope>NUCLEOTIDE SEQUENCE [LARGE SCALE GENOMIC DNA]</scope>
    <source>
        <strain>SE11</strain>
    </source>
</reference>
<accession>B6I988</accession>
<dbReference type="EC" id="1.14.99.46" evidence="1"/>
<dbReference type="EMBL" id="AP009240">
    <property type="protein sequence ID" value="BAG76598.1"/>
    <property type="molecule type" value="Genomic_DNA"/>
</dbReference>
<dbReference type="SMR" id="B6I988"/>
<dbReference type="KEGG" id="ecy:ECSE_1074"/>
<dbReference type="HOGENOM" id="CLU_027853_1_1_6"/>
<dbReference type="Proteomes" id="UP000008199">
    <property type="component" value="Chromosome"/>
</dbReference>
<dbReference type="GO" id="GO:0008726">
    <property type="term" value="F:alkanesulfonate monooxygenase activity"/>
    <property type="evidence" value="ECO:0007669"/>
    <property type="project" value="TreeGrafter"/>
</dbReference>
<dbReference type="GO" id="GO:0052614">
    <property type="term" value="F:uracil oxygenase activity"/>
    <property type="evidence" value="ECO:0007669"/>
    <property type="project" value="UniProtKB-EC"/>
</dbReference>
<dbReference type="GO" id="GO:0046306">
    <property type="term" value="P:alkanesulfonate catabolic process"/>
    <property type="evidence" value="ECO:0007669"/>
    <property type="project" value="TreeGrafter"/>
</dbReference>
<dbReference type="GO" id="GO:0019740">
    <property type="term" value="P:nitrogen utilization"/>
    <property type="evidence" value="ECO:0007669"/>
    <property type="project" value="UniProtKB-UniRule"/>
</dbReference>
<dbReference type="GO" id="GO:0006212">
    <property type="term" value="P:uracil catabolic process"/>
    <property type="evidence" value="ECO:0007669"/>
    <property type="project" value="UniProtKB-UniRule"/>
</dbReference>
<dbReference type="CDD" id="cd01094">
    <property type="entry name" value="Alkanesulfonate_monoxygenase"/>
    <property type="match status" value="1"/>
</dbReference>
<dbReference type="FunFam" id="3.20.20.30:FF:000003">
    <property type="entry name" value="Pyrimidine monooxygenase RutA"/>
    <property type="match status" value="1"/>
</dbReference>
<dbReference type="Gene3D" id="3.20.20.30">
    <property type="entry name" value="Luciferase-like domain"/>
    <property type="match status" value="1"/>
</dbReference>
<dbReference type="HAMAP" id="MF_01699">
    <property type="entry name" value="RutA"/>
    <property type="match status" value="1"/>
</dbReference>
<dbReference type="InterPro" id="IPR011251">
    <property type="entry name" value="Luciferase-like_dom"/>
</dbReference>
<dbReference type="InterPro" id="IPR036661">
    <property type="entry name" value="Luciferase-like_sf"/>
</dbReference>
<dbReference type="InterPro" id="IPR019914">
    <property type="entry name" value="Pyrimidine_monooxygenase_RutA"/>
</dbReference>
<dbReference type="InterPro" id="IPR050172">
    <property type="entry name" value="SsuD_RutA_monooxygenase"/>
</dbReference>
<dbReference type="NCBIfam" id="TIGR03612">
    <property type="entry name" value="RutA"/>
    <property type="match status" value="1"/>
</dbReference>
<dbReference type="PANTHER" id="PTHR42847">
    <property type="entry name" value="ALKANESULFONATE MONOOXYGENASE"/>
    <property type="match status" value="1"/>
</dbReference>
<dbReference type="PANTHER" id="PTHR42847:SF4">
    <property type="entry name" value="ALKANESULFONATE MONOOXYGENASE-RELATED"/>
    <property type="match status" value="1"/>
</dbReference>
<dbReference type="Pfam" id="PF00296">
    <property type="entry name" value="Bac_luciferase"/>
    <property type="match status" value="1"/>
</dbReference>
<dbReference type="SUPFAM" id="SSF51679">
    <property type="entry name" value="Bacterial luciferase-like"/>
    <property type="match status" value="1"/>
</dbReference>
<comment type="function">
    <text evidence="1">Catalyzes the pyrimidine ring opening between N-3 and C-4 by an unusual flavin hydroperoxide-catalyzed mechanism, adding oxygen atoms in the process to yield ureidoacrylate peracid, that immediately reacts with FMN forming ureidoacrylate and FMN-N(5)-oxide. The FMN-N(5)-oxide reacts spontaneously with NADH to produce FMN. Requires the flavin reductase RutF to regenerate FMN in vivo.</text>
</comment>
<comment type="catalytic activity">
    <reaction evidence="1">
        <text>uracil + FMNH2 + NADH + O2 = (Z)-3-ureidoacrylate + FMN + NAD(+) + H2O + H(+)</text>
        <dbReference type="Rhea" id="RHEA:31587"/>
        <dbReference type="ChEBI" id="CHEBI:15377"/>
        <dbReference type="ChEBI" id="CHEBI:15378"/>
        <dbReference type="ChEBI" id="CHEBI:15379"/>
        <dbReference type="ChEBI" id="CHEBI:17568"/>
        <dbReference type="ChEBI" id="CHEBI:57540"/>
        <dbReference type="ChEBI" id="CHEBI:57618"/>
        <dbReference type="ChEBI" id="CHEBI:57945"/>
        <dbReference type="ChEBI" id="CHEBI:58210"/>
        <dbReference type="ChEBI" id="CHEBI:59891"/>
        <dbReference type="EC" id="1.14.99.46"/>
    </reaction>
</comment>
<comment type="catalytic activity">
    <reaction evidence="1">
        <text>thymine + FMNH2 + NADH + O2 = (Z)-2-methylureidoacrylate + FMN + NAD(+) + H2O + H(+)</text>
        <dbReference type="Rhea" id="RHEA:31599"/>
        <dbReference type="ChEBI" id="CHEBI:15377"/>
        <dbReference type="ChEBI" id="CHEBI:15378"/>
        <dbReference type="ChEBI" id="CHEBI:15379"/>
        <dbReference type="ChEBI" id="CHEBI:17821"/>
        <dbReference type="ChEBI" id="CHEBI:57540"/>
        <dbReference type="ChEBI" id="CHEBI:57618"/>
        <dbReference type="ChEBI" id="CHEBI:57945"/>
        <dbReference type="ChEBI" id="CHEBI:58210"/>
        <dbReference type="ChEBI" id="CHEBI:143783"/>
        <dbReference type="EC" id="1.14.99.46"/>
    </reaction>
</comment>
<comment type="induction">
    <text evidence="1">Up-regulated by the nitrogen regulatory protein C (NtrC also called GlnG) and repressed by RutR.</text>
</comment>
<comment type="similarity">
    <text evidence="1">Belongs to the NtaA/SnaA/DszA monooxygenase family. RutA subfamily.</text>
</comment>
<organism>
    <name type="scientific">Escherichia coli (strain SE11)</name>
    <dbReference type="NCBI Taxonomy" id="409438"/>
    <lineage>
        <taxon>Bacteria</taxon>
        <taxon>Pseudomonadati</taxon>
        <taxon>Pseudomonadota</taxon>
        <taxon>Gammaproteobacteria</taxon>
        <taxon>Enterobacterales</taxon>
        <taxon>Enterobacteriaceae</taxon>
        <taxon>Escherichia</taxon>
    </lineage>
</organism>
<keyword id="KW-0285">Flavoprotein</keyword>
<keyword id="KW-0288">FMN</keyword>
<keyword id="KW-0503">Monooxygenase</keyword>
<keyword id="KW-0521">NADP</keyword>
<keyword id="KW-0560">Oxidoreductase</keyword>
<sequence>MQDAAPRLTFTLRDEERLMMKIGVFVPIGNNGWLISTHAPQYMPTFELNKAIVQKAEHYHFDFALSMIKLRGFGGKTEFWDHNLESFTLMAGLAAVTSRIQIYATAATLTLPPAIVARMAATIDSISGGRFGVNLVTGWQKPEYEQMGIWPGDDYFSRRYDYLTEYVQVLRDLWGTGKSDFKGDFFTMNDCRVSPQPSVPMKVICAGQSDAGMAFSAQYADFNFCFGKGVNTPTAFAPTAARMKQAAEQSGRDVGSYVLFMVIADETDDAARAKWEHYKAGADEEALSWLTEQSQKDTRSGTDTNVRQMADPTSAVNINMGTLVGSYASVARMLDEVASVPGAEGVLLTFDDFLSGIETFGERIQPLMQCRAHLPALTQEVA</sequence>
<feature type="chain" id="PRO_0000402601" description="Pyrimidine monooxygenase RutA">
    <location>
        <begin position="1"/>
        <end position="382"/>
    </location>
</feature>
<feature type="binding site" evidence="1">
    <location>
        <begin position="68"/>
        <end position="69"/>
    </location>
    <ligand>
        <name>FMN</name>
        <dbReference type="ChEBI" id="CHEBI:58210"/>
    </ligand>
</feature>
<feature type="binding site" evidence="1">
    <location>
        <position position="134"/>
    </location>
    <ligand>
        <name>FMN</name>
        <dbReference type="ChEBI" id="CHEBI:58210"/>
    </ligand>
</feature>
<feature type="binding site" evidence="1">
    <location>
        <position position="143"/>
    </location>
    <ligand>
        <name>FMN</name>
        <dbReference type="ChEBI" id="CHEBI:58210"/>
    </ligand>
</feature>
<feature type="binding site" evidence="1">
    <location>
        <begin position="159"/>
        <end position="160"/>
    </location>
    <ligand>
        <name>FMN</name>
        <dbReference type="ChEBI" id="CHEBI:58210"/>
    </ligand>
</feature>
<feature type="binding site" evidence="1">
    <location>
        <position position="209"/>
    </location>
    <ligand>
        <name>FMN</name>
        <dbReference type="ChEBI" id="CHEBI:58210"/>
    </ligand>
</feature>